<gene>
    <name evidence="1" type="primary">tusB</name>
    <name type="ordered locus">Z4701</name>
    <name type="ordered locus">ECs4194</name>
</gene>
<reference key="1">
    <citation type="journal article" date="2001" name="Nature">
        <title>Genome sequence of enterohaemorrhagic Escherichia coli O157:H7.</title>
        <authorList>
            <person name="Perna N.T."/>
            <person name="Plunkett G. III"/>
            <person name="Burland V."/>
            <person name="Mau B."/>
            <person name="Glasner J.D."/>
            <person name="Rose D.J."/>
            <person name="Mayhew G.F."/>
            <person name="Evans P.S."/>
            <person name="Gregor J."/>
            <person name="Kirkpatrick H.A."/>
            <person name="Posfai G."/>
            <person name="Hackett J."/>
            <person name="Klink S."/>
            <person name="Boutin A."/>
            <person name="Shao Y."/>
            <person name="Miller L."/>
            <person name="Grotbeck E.J."/>
            <person name="Davis N.W."/>
            <person name="Lim A."/>
            <person name="Dimalanta E.T."/>
            <person name="Potamousis K."/>
            <person name="Apodaca J."/>
            <person name="Anantharaman T.S."/>
            <person name="Lin J."/>
            <person name="Yen G."/>
            <person name="Schwartz D.C."/>
            <person name="Welch R.A."/>
            <person name="Blattner F.R."/>
        </authorList>
    </citation>
    <scope>NUCLEOTIDE SEQUENCE [LARGE SCALE GENOMIC DNA]</scope>
    <source>
        <strain>O157:H7 / EDL933 / ATCC 700927 / EHEC</strain>
    </source>
</reference>
<reference key="2">
    <citation type="journal article" date="2001" name="DNA Res.">
        <title>Complete genome sequence of enterohemorrhagic Escherichia coli O157:H7 and genomic comparison with a laboratory strain K-12.</title>
        <authorList>
            <person name="Hayashi T."/>
            <person name="Makino K."/>
            <person name="Ohnishi M."/>
            <person name="Kurokawa K."/>
            <person name="Ishii K."/>
            <person name="Yokoyama K."/>
            <person name="Han C.-G."/>
            <person name="Ohtsubo E."/>
            <person name="Nakayama K."/>
            <person name="Murata T."/>
            <person name="Tanaka M."/>
            <person name="Tobe T."/>
            <person name="Iida T."/>
            <person name="Takami H."/>
            <person name="Honda T."/>
            <person name="Sasakawa C."/>
            <person name="Ogasawara N."/>
            <person name="Yasunaga T."/>
            <person name="Kuhara S."/>
            <person name="Shiba T."/>
            <person name="Hattori M."/>
            <person name="Shinagawa H."/>
        </authorList>
    </citation>
    <scope>NUCLEOTIDE SEQUENCE [LARGE SCALE GENOMIC DNA]</scope>
    <source>
        <strain>O157:H7 / Sakai / RIMD 0509952 / EHEC</strain>
    </source>
</reference>
<comment type="function">
    <text evidence="1">Part of a sulfur-relay system required for 2-thiolation of 5-methylaminomethyl-2-thiouridine (mnm(5)s(2)U) at tRNA wobble positions.</text>
</comment>
<comment type="subunit">
    <text evidence="1">Heterohexamer, formed by a dimer of trimers. The hexameric TusBCD complex contains 2 copies each of TusB, TusC and TusD. The TusBCD complex interacts with TusE.</text>
</comment>
<comment type="subcellular location">
    <subcellularLocation>
        <location evidence="1">Cytoplasm</location>
    </subcellularLocation>
</comment>
<comment type="similarity">
    <text evidence="1">Belongs to the DsrH/TusB family.</text>
</comment>
<evidence type="ECO:0000255" key="1">
    <source>
        <dbReference type="HAMAP-Rule" id="MF_01564"/>
    </source>
</evidence>
<organism>
    <name type="scientific">Escherichia coli O157:H7</name>
    <dbReference type="NCBI Taxonomy" id="83334"/>
    <lineage>
        <taxon>Bacteria</taxon>
        <taxon>Pseudomonadati</taxon>
        <taxon>Pseudomonadota</taxon>
        <taxon>Gammaproteobacteria</taxon>
        <taxon>Enterobacterales</taxon>
        <taxon>Enterobacteriaceae</taxon>
        <taxon>Escherichia</taxon>
    </lineage>
</organism>
<protein>
    <recommendedName>
        <fullName evidence="1">Protein TusB</fullName>
    </recommendedName>
    <alternativeName>
        <fullName evidence="1">tRNA 2-thiouridine synthesizing protein B</fullName>
    </alternativeName>
</protein>
<name>TUSB_ECO57</name>
<sequence>MLHTLHRSPWLTDFAALLRLLSEGDELLLLQDGVTAAVDGNRYLESLRNAPIKVYALNEDLIARGLTGQISNDIIPIDYTDFVRLTVKHSGQMAW</sequence>
<feature type="chain" id="PRO_0000234512" description="Protein TusB">
    <location>
        <begin position="1"/>
        <end position="95"/>
    </location>
</feature>
<dbReference type="EMBL" id="AE005174">
    <property type="protein sequence ID" value="AAG58450.1"/>
    <property type="molecule type" value="Genomic_DNA"/>
</dbReference>
<dbReference type="EMBL" id="BA000007">
    <property type="protein sequence ID" value="BAB37617.1"/>
    <property type="molecule type" value="Genomic_DNA"/>
</dbReference>
<dbReference type="PIR" id="B91153">
    <property type="entry name" value="B91153"/>
</dbReference>
<dbReference type="PIR" id="F85998">
    <property type="entry name" value="F85998"/>
</dbReference>
<dbReference type="RefSeq" id="NP_312221.1">
    <property type="nucleotide sequence ID" value="NC_002695.1"/>
</dbReference>
<dbReference type="RefSeq" id="WP_000903376.1">
    <property type="nucleotide sequence ID" value="NZ_VOAI01000004.1"/>
</dbReference>
<dbReference type="SMR" id="Q8X885"/>
<dbReference type="STRING" id="155864.Z4701"/>
<dbReference type="GeneID" id="915953"/>
<dbReference type="KEGG" id="ece:Z4701"/>
<dbReference type="KEGG" id="ecs:ECs_4194"/>
<dbReference type="PATRIC" id="fig|386585.9.peg.4377"/>
<dbReference type="eggNOG" id="COG2168">
    <property type="taxonomic scope" value="Bacteria"/>
</dbReference>
<dbReference type="HOGENOM" id="CLU_166087_2_1_6"/>
<dbReference type="OMA" id="MLHTINK"/>
<dbReference type="Proteomes" id="UP000000558">
    <property type="component" value="Chromosome"/>
</dbReference>
<dbReference type="Proteomes" id="UP000002519">
    <property type="component" value="Chromosome"/>
</dbReference>
<dbReference type="GO" id="GO:1990228">
    <property type="term" value="C:sulfurtransferase complex"/>
    <property type="evidence" value="ECO:0007669"/>
    <property type="project" value="TreeGrafter"/>
</dbReference>
<dbReference type="GO" id="GO:0002143">
    <property type="term" value="P:tRNA wobble position uridine thiolation"/>
    <property type="evidence" value="ECO:0007669"/>
    <property type="project" value="InterPro"/>
</dbReference>
<dbReference type="FunFam" id="3.40.1260.10:FF:000002">
    <property type="entry name" value="Sulfurtransferase TusB"/>
    <property type="match status" value="1"/>
</dbReference>
<dbReference type="Gene3D" id="3.40.1260.10">
    <property type="entry name" value="DsrEFH-like"/>
    <property type="match status" value="1"/>
</dbReference>
<dbReference type="HAMAP" id="MF_01564">
    <property type="entry name" value="Thiourid_synth_B"/>
    <property type="match status" value="1"/>
</dbReference>
<dbReference type="InterPro" id="IPR027396">
    <property type="entry name" value="DsrEFH-like"/>
</dbReference>
<dbReference type="InterPro" id="IPR023526">
    <property type="entry name" value="Sulphur_relay_TusB"/>
</dbReference>
<dbReference type="InterPro" id="IPR007215">
    <property type="entry name" value="Sulphur_relay_TusB/DsrH"/>
</dbReference>
<dbReference type="NCBIfam" id="NF010035">
    <property type="entry name" value="PRK13510.1"/>
    <property type="match status" value="1"/>
</dbReference>
<dbReference type="NCBIfam" id="TIGR03011">
    <property type="entry name" value="sulf_tusB_dsrH"/>
    <property type="match status" value="1"/>
</dbReference>
<dbReference type="PANTHER" id="PTHR37526">
    <property type="entry name" value="PROTEIN TUSB"/>
    <property type="match status" value="1"/>
</dbReference>
<dbReference type="PANTHER" id="PTHR37526:SF1">
    <property type="entry name" value="PROTEIN TUSB"/>
    <property type="match status" value="1"/>
</dbReference>
<dbReference type="Pfam" id="PF04077">
    <property type="entry name" value="DsrH"/>
    <property type="match status" value="1"/>
</dbReference>
<dbReference type="SUPFAM" id="SSF75169">
    <property type="entry name" value="DsrEFH-like"/>
    <property type="match status" value="1"/>
</dbReference>
<accession>Q8X885</accession>
<accession>Q7AAD3</accession>
<proteinExistence type="inferred from homology"/>
<keyword id="KW-0963">Cytoplasm</keyword>
<keyword id="KW-1185">Reference proteome</keyword>
<keyword id="KW-0819">tRNA processing</keyword>